<evidence type="ECO:0000250" key="1">
    <source>
        <dbReference type="UniProtKB" id="Q9M2U1"/>
    </source>
</evidence>
<evidence type="ECO:0000255" key="2">
    <source>
        <dbReference type="PROSITE-ProRule" id="PRU00071"/>
    </source>
</evidence>
<evidence type="ECO:0000256" key="3">
    <source>
        <dbReference type="SAM" id="MobiDB-lite"/>
    </source>
</evidence>
<evidence type="ECO:0000269" key="4">
    <source>
    </source>
</evidence>
<evidence type="ECO:0000269" key="5">
    <source>
    </source>
</evidence>
<evidence type="ECO:0000269" key="6">
    <source>
    </source>
</evidence>
<evidence type="ECO:0000269" key="7">
    <source>
    </source>
</evidence>
<evidence type="ECO:0000303" key="8">
    <source>
    </source>
</evidence>
<evidence type="ECO:0000303" key="9">
    <source>
    </source>
</evidence>
<evidence type="ECO:0000303" key="10">
    <source>
    </source>
</evidence>
<evidence type="ECO:0000303" key="11">
    <source>
    </source>
</evidence>
<evidence type="ECO:0000303" key="12">
    <source>
    </source>
</evidence>
<evidence type="ECO:0000305" key="13"/>
<evidence type="ECO:0000312" key="14">
    <source>
        <dbReference type="Araport" id="AT1G07640"/>
    </source>
</evidence>
<evidence type="ECO:0000312" key="15">
    <source>
        <dbReference type="EMBL" id="AAF75094.1"/>
    </source>
</evidence>
<comment type="function">
    <text evidence="1 5 6 7">Transcription factor that binds specifically to a 5'-AA[AG]G-3' consensus core sequence. Enhances the DNA binding of OBF transcription factors to OCS elements (By similarity). Involved in the regulation of root development (PubMed:23057675). The PEAR proteins (e.g. DOF2.4, DOF5.1, DOF3.2, DOF1.1, DOF5.6 and DOF5.3) activate gene expression that promotes radial growth of protophloem sieve elements (PubMed:30626969). Element of a regulatory network controlling indole glucosinolates (IGS) biosynthesis, probably by inducing the expression of accurate genes (e.g. CYP83B1). Promotes apical dominance (PubMed:16740150).</text>
</comment>
<comment type="subunit">
    <text evidence="4">Interacts with OBF4.</text>
</comment>
<comment type="subcellular location">
    <subcellularLocation>
        <location evidence="13">Nucleus</location>
    </subcellularLocation>
</comment>
<comment type="alternative products">
    <event type="alternative splicing"/>
    <isoform>
        <id>Q8L9V6-1</id>
        <name>1</name>
        <sequence type="displayed"/>
    </isoform>
    <isoform>
        <id>Q8L9V6-2</id>
        <name>2</name>
        <sequence type="described" ref="VSP_011776"/>
    </isoform>
</comment>
<comment type="tissue specificity">
    <text evidence="4 5 6 7">Expressed in the vasculature (mainly in the phloem and associated cell files) of cotyledons, leaves, roots, flower stalks and petals (PubMed:10758484, PubMed:16740150, PubMed:23057675). The PEAR proteins (e.g. DOF2.4, DOF5.1, DOF3.2, DOF1.1, DOF5.6 and DOF5.3) form a short-range concentration gradient that peaks at protophloem sieve elements (PSE) (PubMed:30626969).</text>
</comment>
<comment type="developmental stage">
    <text evidence="5">In roots, confined to the central cylinder (vascular tissue and pericycle) of both main and lateral roots. In leaves, expressed in the vasculature, mostly in phloem cells. Also present in the vasculature of stems and in stamen filaments of flowers. Detected at low levels in the vasculature of petals and carpels.</text>
</comment>
<comment type="induction">
    <text evidence="4 5">By auxin and salicylic acid (SA) (PubMed:10758484). Induced transiently in response to the generalist herbivore S.littoralis. Triggered by methyl jasmonate (MeJA) and wounding (PubMed:16740150).</text>
</comment>
<comment type="disruption phenotype">
    <text evidence="5">Reduced expression of CYP83B1. Longer hypocotyls and increased lateral root formation.</text>
</comment>
<comment type="sequence caution" evidence="13">
    <conflict type="frameshift">
        <sequence resource="EMBL-CDS" id="AAD38986"/>
    </conflict>
</comment>
<comment type="sequence caution" evidence="13">
    <conflict type="erroneous gene model prediction">
        <sequence resource="EMBL-CDS" id="AAF75094"/>
    </conflict>
</comment>
<protein>
    <recommendedName>
        <fullName evidence="9">Dof zinc finger protein DOF1.1</fullName>
        <shortName evidence="9">AtDOF1.1</shortName>
    </recommendedName>
    <alternativeName>
        <fullName evidence="8">OBF-binding protein 2</fullName>
    </alternativeName>
    <alternativeName>
        <fullName evidence="12">Protein PHLOEM EARLY DOF OBP2</fullName>
    </alternativeName>
    <alternativeName>
        <fullName evidence="11">Protein UAS-TAGGED ROOT PATTERNING 3</fullName>
    </alternativeName>
</protein>
<feature type="chain" id="PRO_0000074263" description="Dof zinc finger protein DOF1.1">
    <location>
        <begin position="1"/>
        <end position="331"/>
    </location>
</feature>
<feature type="zinc finger region" description="Dof-type" evidence="2">
    <location>
        <begin position="77"/>
        <end position="131"/>
    </location>
</feature>
<feature type="region of interest" description="Disordered" evidence="3">
    <location>
        <begin position="121"/>
        <end position="166"/>
    </location>
</feature>
<feature type="region of interest" description="Disordered" evidence="3">
    <location>
        <begin position="291"/>
        <end position="331"/>
    </location>
</feature>
<feature type="compositionally biased region" description="Low complexity" evidence="3">
    <location>
        <begin position="135"/>
        <end position="160"/>
    </location>
</feature>
<feature type="compositionally biased region" description="Polar residues" evidence="3">
    <location>
        <begin position="305"/>
        <end position="316"/>
    </location>
</feature>
<feature type="binding site" evidence="2">
    <location>
        <position position="79"/>
    </location>
    <ligand>
        <name>Zn(2+)</name>
        <dbReference type="ChEBI" id="CHEBI:29105"/>
    </ligand>
</feature>
<feature type="binding site" evidence="2">
    <location>
        <position position="82"/>
    </location>
    <ligand>
        <name>Zn(2+)</name>
        <dbReference type="ChEBI" id="CHEBI:29105"/>
    </ligand>
</feature>
<feature type="binding site" evidence="2">
    <location>
        <position position="104"/>
    </location>
    <ligand>
        <name>Zn(2+)</name>
        <dbReference type="ChEBI" id="CHEBI:29105"/>
    </ligand>
</feature>
<feature type="binding site" evidence="2">
    <location>
        <position position="107"/>
    </location>
    <ligand>
        <name>Zn(2+)</name>
        <dbReference type="ChEBI" id="CHEBI:29105"/>
    </ligand>
</feature>
<feature type="splice variant" id="VSP_011776" description="In isoform 2." evidence="8 10">
    <location>
        <begin position="1"/>
        <end position="56"/>
    </location>
</feature>
<feature type="sequence conflict" description="In Ref. 5; AAM65740." evidence="13" ref="5">
    <original>H</original>
    <variation>Y</variation>
    <location>
        <position position="102"/>
    </location>
</feature>
<feature type="sequence conflict" description="In Ref. 5; AAM65740." evidence="13" ref="5">
    <original>L</original>
    <variation>I</variation>
    <location>
        <position position="330"/>
    </location>
</feature>
<keyword id="KW-0025">Alternative splicing</keyword>
<keyword id="KW-0238">DNA-binding</keyword>
<keyword id="KW-0479">Metal-binding</keyword>
<keyword id="KW-0539">Nucleus</keyword>
<keyword id="KW-1185">Reference proteome</keyword>
<keyword id="KW-0804">Transcription</keyword>
<keyword id="KW-0805">Transcription regulation</keyword>
<keyword id="KW-0862">Zinc</keyword>
<keyword id="KW-0863">Zinc-finger</keyword>
<dbReference type="EMBL" id="AF155816">
    <property type="protein sequence ID" value="AAD38986.1"/>
    <property type="status" value="ALT_FRAME"/>
    <property type="molecule type" value="mRNA"/>
</dbReference>
<dbReference type="EMBL" id="AC007583">
    <property type="protein sequence ID" value="AAF75094.1"/>
    <property type="status" value="ALT_SEQ"/>
    <property type="molecule type" value="Genomic_DNA"/>
</dbReference>
<dbReference type="EMBL" id="CP002684">
    <property type="protein sequence ID" value="AEE28152.1"/>
    <property type="molecule type" value="Genomic_DNA"/>
</dbReference>
<dbReference type="EMBL" id="CP002684">
    <property type="protein sequence ID" value="AEE28153.1"/>
    <property type="molecule type" value="Genomic_DNA"/>
</dbReference>
<dbReference type="EMBL" id="AY062715">
    <property type="protein sequence ID" value="AAL32793.1"/>
    <property type="molecule type" value="mRNA"/>
</dbReference>
<dbReference type="EMBL" id="AY093351">
    <property type="protein sequence ID" value="AAM13350.1"/>
    <property type="molecule type" value="mRNA"/>
</dbReference>
<dbReference type="EMBL" id="AY088198">
    <property type="protein sequence ID" value="AAM65740.1"/>
    <property type="molecule type" value="mRNA"/>
</dbReference>
<dbReference type="PIR" id="H86210">
    <property type="entry name" value="H86210"/>
</dbReference>
<dbReference type="RefSeq" id="NP_001030988.1">
    <property type="nucleotide sequence ID" value="NM_001035911.2"/>
</dbReference>
<dbReference type="RefSeq" id="NP_563792.3">
    <molecule id="Q8L9V6-1"/>
    <property type="nucleotide sequence ID" value="NM_100637.4"/>
</dbReference>
<dbReference type="RefSeq" id="NP_850938.1">
    <molecule id="Q8L9V6-2"/>
    <property type="nucleotide sequence ID" value="NM_180607.2"/>
</dbReference>
<dbReference type="BioGRID" id="22518">
    <property type="interactions" value="2"/>
</dbReference>
<dbReference type="FunCoup" id="Q8L9V6">
    <property type="interactions" value="3"/>
</dbReference>
<dbReference type="STRING" id="3702.Q8L9V6"/>
<dbReference type="iPTMnet" id="Q8L9V6"/>
<dbReference type="PaxDb" id="3702-AT1G07640.3"/>
<dbReference type="EnsemblPlants" id="AT1G07640.1">
    <molecule id="Q8L9V6-2"/>
    <property type="protein sequence ID" value="AT1G07640.1"/>
    <property type="gene ID" value="AT1G07640"/>
</dbReference>
<dbReference type="EnsemblPlants" id="AT1G07640.2">
    <molecule id="Q8L9V6-1"/>
    <property type="protein sequence ID" value="AT1G07640.2"/>
    <property type="gene ID" value="AT1G07640"/>
</dbReference>
<dbReference type="GeneID" id="837277"/>
<dbReference type="Gramene" id="AT1G07640.1">
    <molecule id="Q8L9V6-2"/>
    <property type="protein sequence ID" value="AT1G07640.1"/>
    <property type="gene ID" value="AT1G07640"/>
</dbReference>
<dbReference type="Gramene" id="AT1G07640.2">
    <molecule id="Q8L9V6-1"/>
    <property type="protein sequence ID" value="AT1G07640.2"/>
    <property type="gene ID" value="AT1G07640"/>
</dbReference>
<dbReference type="KEGG" id="ath:AT1G07640"/>
<dbReference type="Araport" id="AT1G07640"/>
<dbReference type="TAIR" id="AT1G07640">
    <property type="gene designation" value="OBP2"/>
</dbReference>
<dbReference type="eggNOG" id="ENOG502RPNM">
    <property type="taxonomic scope" value="Eukaryota"/>
</dbReference>
<dbReference type="InParanoid" id="Q8L9V6"/>
<dbReference type="PhylomeDB" id="Q8L9V6"/>
<dbReference type="PRO" id="PR:Q8L9V6"/>
<dbReference type="Proteomes" id="UP000006548">
    <property type="component" value="Chromosome 1"/>
</dbReference>
<dbReference type="ExpressionAtlas" id="Q8L9V6">
    <property type="expression patterns" value="baseline and differential"/>
</dbReference>
<dbReference type="GO" id="GO:0005634">
    <property type="term" value="C:nucleus"/>
    <property type="evidence" value="ECO:0007669"/>
    <property type="project" value="UniProtKB-SubCell"/>
</dbReference>
<dbReference type="GO" id="GO:0003677">
    <property type="term" value="F:DNA binding"/>
    <property type="evidence" value="ECO:0007669"/>
    <property type="project" value="UniProtKB-KW"/>
</dbReference>
<dbReference type="GO" id="GO:0003700">
    <property type="term" value="F:DNA-binding transcription factor activity"/>
    <property type="evidence" value="ECO:0007669"/>
    <property type="project" value="InterPro"/>
</dbReference>
<dbReference type="GO" id="GO:0008270">
    <property type="term" value="F:zinc ion binding"/>
    <property type="evidence" value="ECO:0007669"/>
    <property type="project" value="UniProtKB-KW"/>
</dbReference>
<dbReference type="GO" id="GO:0010439">
    <property type="term" value="P:regulation of glucosinolate biosynthetic process"/>
    <property type="evidence" value="ECO:0000315"/>
    <property type="project" value="UniProtKB"/>
</dbReference>
<dbReference type="GO" id="GO:2000280">
    <property type="term" value="P:regulation of root development"/>
    <property type="evidence" value="ECO:0000315"/>
    <property type="project" value="UniProtKB"/>
</dbReference>
<dbReference type="GO" id="GO:0009625">
    <property type="term" value="P:response to insect"/>
    <property type="evidence" value="ECO:0000270"/>
    <property type="project" value="UniProtKB"/>
</dbReference>
<dbReference type="GO" id="GO:0009753">
    <property type="term" value="P:response to jasmonic acid"/>
    <property type="evidence" value="ECO:0000270"/>
    <property type="project" value="UniProtKB"/>
</dbReference>
<dbReference type="GO" id="GO:0009611">
    <property type="term" value="P:response to wounding"/>
    <property type="evidence" value="ECO:0000270"/>
    <property type="project" value="UniProtKB"/>
</dbReference>
<dbReference type="InterPro" id="IPR045174">
    <property type="entry name" value="Dof"/>
</dbReference>
<dbReference type="InterPro" id="IPR003851">
    <property type="entry name" value="Znf_Dof"/>
</dbReference>
<dbReference type="PANTHER" id="PTHR31992:SF167">
    <property type="entry name" value="DOF ZINC FINGER PROTEIN DOF1.1"/>
    <property type="match status" value="1"/>
</dbReference>
<dbReference type="PANTHER" id="PTHR31992">
    <property type="entry name" value="DOF ZINC FINGER PROTEIN DOF1.4-RELATED"/>
    <property type="match status" value="1"/>
</dbReference>
<dbReference type="Pfam" id="PF02701">
    <property type="entry name" value="Zn_ribbon_Dof"/>
    <property type="match status" value="1"/>
</dbReference>
<dbReference type="PROSITE" id="PS01361">
    <property type="entry name" value="ZF_DOF_1"/>
    <property type="match status" value="1"/>
</dbReference>
<dbReference type="PROSITE" id="PS50884">
    <property type="entry name" value="ZF_DOF_2"/>
    <property type="match status" value="1"/>
</dbReference>
<name>DOF11_ARATH</name>
<sequence>MPTNSNHQHHLQHQLNENGSIISGHGLVLSHQLPPLQANPNPNHHHVATSAGLPSRMGGSMAERARQANIPPLAGPLKCPRCDSSNTKFCYYNNYNLTQPRHFCKGCRRYWTQGGALRNVPVGGGCRRNNKKGKNGNLKSSSSSSKQSSSVNAQSPSSGQLRTNHQFPFSPTLYNLTQLGGIGLNLAATNGNNQAHQIGSSLMMSDLGFLHGRNTSTPMTGNIHENNNNNNNENNLMASVGSLSPFALFDPTTGLYAFQNDGNIGNNVGISGSSTSMVDSRVYQTPPVKMEEQPNLANLSRPVSGLTSPGNQTNQYFWPGSDFSGPSNDLL</sequence>
<proteinExistence type="evidence at protein level"/>
<reference key="1">
    <citation type="journal article" date="2000" name="Plant J.">
        <title>Characterization of salicylic acid-responsive, Arabidopsis Dof domain proteins: overexpression of OBP3 leads to growth defects.</title>
        <authorList>
            <person name="Kang H.-G."/>
            <person name="Singh K.B."/>
        </authorList>
    </citation>
    <scope>NUCLEOTIDE SEQUENCE [MRNA] (ISOFORM 2)</scope>
    <scope>TISSUE SPECIFICITY</scope>
    <scope>INDUCTION</scope>
    <scope>INTERACTION WITH OBF4</scope>
    <source>
        <strain>cv. Columbia</strain>
    </source>
</reference>
<reference key="2">
    <citation type="journal article" date="2000" name="Nature">
        <title>Sequence and analysis of chromosome 1 of the plant Arabidopsis thaliana.</title>
        <authorList>
            <person name="Theologis A."/>
            <person name="Ecker J.R."/>
            <person name="Palm C.J."/>
            <person name="Federspiel N.A."/>
            <person name="Kaul S."/>
            <person name="White O."/>
            <person name="Alonso J."/>
            <person name="Altafi H."/>
            <person name="Araujo R."/>
            <person name="Bowman C.L."/>
            <person name="Brooks S.Y."/>
            <person name="Buehler E."/>
            <person name="Chan A."/>
            <person name="Chao Q."/>
            <person name="Chen H."/>
            <person name="Cheuk R.F."/>
            <person name="Chin C.W."/>
            <person name="Chung M.K."/>
            <person name="Conn L."/>
            <person name="Conway A.B."/>
            <person name="Conway A.R."/>
            <person name="Creasy T.H."/>
            <person name="Dewar K."/>
            <person name="Dunn P."/>
            <person name="Etgu P."/>
            <person name="Feldblyum T.V."/>
            <person name="Feng J.-D."/>
            <person name="Fong B."/>
            <person name="Fujii C.Y."/>
            <person name="Gill J.E."/>
            <person name="Goldsmith A.D."/>
            <person name="Haas B."/>
            <person name="Hansen N.F."/>
            <person name="Hughes B."/>
            <person name="Huizar L."/>
            <person name="Hunter J.L."/>
            <person name="Jenkins J."/>
            <person name="Johnson-Hopson C."/>
            <person name="Khan S."/>
            <person name="Khaykin E."/>
            <person name="Kim C.J."/>
            <person name="Koo H.L."/>
            <person name="Kremenetskaia I."/>
            <person name="Kurtz D.B."/>
            <person name="Kwan A."/>
            <person name="Lam B."/>
            <person name="Langin-Hooper S."/>
            <person name="Lee A."/>
            <person name="Lee J.M."/>
            <person name="Lenz C.A."/>
            <person name="Li J.H."/>
            <person name="Li Y.-P."/>
            <person name="Lin X."/>
            <person name="Liu S.X."/>
            <person name="Liu Z.A."/>
            <person name="Luros J.S."/>
            <person name="Maiti R."/>
            <person name="Marziali A."/>
            <person name="Militscher J."/>
            <person name="Miranda M."/>
            <person name="Nguyen M."/>
            <person name="Nierman W.C."/>
            <person name="Osborne B.I."/>
            <person name="Pai G."/>
            <person name="Peterson J."/>
            <person name="Pham P.K."/>
            <person name="Rizzo M."/>
            <person name="Rooney T."/>
            <person name="Rowley D."/>
            <person name="Sakano H."/>
            <person name="Salzberg S.L."/>
            <person name="Schwartz J.R."/>
            <person name="Shinn P."/>
            <person name="Southwick A.M."/>
            <person name="Sun H."/>
            <person name="Tallon L.J."/>
            <person name="Tambunga G."/>
            <person name="Toriumi M.J."/>
            <person name="Town C.D."/>
            <person name="Utterback T."/>
            <person name="Van Aken S."/>
            <person name="Vaysberg M."/>
            <person name="Vysotskaia V.S."/>
            <person name="Walker M."/>
            <person name="Wu D."/>
            <person name="Yu G."/>
            <person name="Fraser C.M."/>
            <person name="Venter J.C."/>
            <person name="Davis R.W."/>
        </authorList>
    </citation>
    <scope>NUCLEOTIDE SEQUENCE [LARGE SCALE GENOMIC DNA]</scope>
    <source>
        <strain>cv. Columbia</strain>
    </source>
</reference>
<reference key="3">
    <citation type="journal article" date="2017" name="Plant J.">
        <title>Araport11: a complete reannotation of the Arabidopsis thaliana reference genome.</title>
        <authorList>
            <person name="Cheng C.Y."/>
            <person name="Krishnakumar V."/>
            <person name="Chan A.P."/>
            <person name="Thibaud-Nissen F."/>
            <person name="Schobel S."/>
            <person name="Town C.D."/>
        </authorList>
    </citation>
    <scope>GENOME REANNOTATION</scope>
    <source>
        <strain>cv. Columbia</strain>
    </source>
</reference>
<reference key="4">
    <citation type="journal article" date="2003" name="Science">
        <title>Empirical analysis of transcriptional activity in the Arabidopsis genome.</title>
        <authorList>
            <person name="Yamada K."/>
            <person name="Lim J."/>
            <person name="Dale J.M."/>
            <person name="Chen H."/>
            <person name="Shinn P."/>
            <person name="Palm C.J."/>
            <person name="Southwick A.M."/>
            <person name="Wu H.C."/>
            <person name="Kim C.J."/>
            <person name="Nguyen M."/>
            <person name="Pham P.K."/>
            <person name="Cheuk R.F."/>
            <person name="Karlin-Newmann G."/>
            <person name="Liu S.X."/>
            <person name="Lam B."/>
            <person name="Sakano H."/>
            <person name="Wu T."/>
            <person name="Yu G."/>
            <person name="Miranda M."/>
            <person name="Quach H.L."/>
            <person name="Tripp M."/>
            <person name="Chang C.H."/>
            <person name="Lee J.M."/>
            <person name="Toriumi M.J."/>
            <person name="Chan M.M."/>
            <person name="Tang C.C."/>
            <person name="Onodera C.S."/>
            <person name="Deng J.M."/>
            <person name="Akiyama K."/>
            <person name="Ansari Y."/>
            <person name="Arakawa T."/>
            <person name="Banh J."/>
            <person name="Banno F."/>
            <person name="Bowser L."/>
            <person name="Brooks S.Y."/>
            <person name="Carninci P."/>
            <person name="Chao Q."/>
            <person name="Choy N."/>
            <person name="Enju A."/>
            <person name="Goldsmith A.D."/>
            <person name="Gurjal M."/>
            <person name="Hansen N.F."/>
            <person name="Hayashizaki Y."/>
            <person name="Johnson-Hopson C."/>
            <person name="Hsuan V.W."/>
            <person name="Iida K."/>
            <person name="Karnes M."/>
            <person name="Khan S."/>
            <person name="Koesema E."/>
            <person name="Ishida J."/>
            <person name="Jiang P.X."/>
            <person name="Jones T."/>
            <person name="Kawai J."/>
            <person name="Kamiya A."/>
            <person name="Meyers C."/>
            <person name="Nakajima M."/>
            <person name="Narusaka M."/>
            <person name="Seki M."/>
            <person name="Sakurai T."/>
            <person name="Satou M."/>
            <person name="Tamse R."/>
            <person name="Vaysberg M."/>
            <person name="Wallender E.K."/>
            <person name="Wong C."/>
            <person name="Yamamura Y."/>
            <person name="Yuan S."/>
            <person name="Shinozaki K."/>
            <person name="Davis R.W."/>
            <person name="Theologis A."/>
            <person name="Ecker J.R."/>
        </authorList>
    </citation>
    <scope>NUCLEOTIDE SEQUENCE [LARGE SCALE MRNA] (ISOFORM 2)</scope>
    <source>
        <strain>cv. Columbia</strain>
    </source>
</reference>
<reference key="5">
    <citation type="submission" date="2002-03" db="EMBL/GenBank/DDBJ databases">
        <title>Full-length cDNA from Arabidopsis thaliana.</title>
        <authorList>
            <person name="Brover V.V."/>
            <person name="Troukhan M.E."/>
            <person name="Alexandrov N.A."/>
            <person name="Lu Y.-P."/>
            <person name="Flavell R.B."/>
            <person name="Feldmann K.A."/>
        </authorList>
    </citation>
    <scope>NUCLEOTIDE SEQUENCE [LARGE SCALE MRNA] (ISOFORM 1)</scope>
</reference>
<reference key="6">
    <citation type="journal article" date="2002" name="Trends Plant Sci.">
        <title>The Dof family of plant transcription factors.</title>
        <authorList>
            <person name="Yanagisawa S."/>
        </authorList>
    </citation>
    <scope>GENE FAMILY</scope>
    <scope>NOMENCLATURE</scope>
</reference>
<reference key="7">
    <citation type="journal article" date="2006" name="Plant J.">
        <title>DOF transcription factor AtDof1.1 (OBP2) is part of a regulatory network controlling glucosinolate biosynthesis in Arabidopsis.</title>
        <authorList>
            <person name="Skirycz A."/>
            <person name="Reichelt M."/>
            <person name="Burow M."/>
            <person name="Birkemeyer C."/>
            <person name="Rolcik J."/>
            <person name="Kopka J."/>
            <person name="Zanor M.I."/>
            <person name="Gershenzon J."/>
            <person name="Strnad M."/>
            <person name="Szopa J."/>
            <person name="Mueller-Roeber B."/>
            <person name="Witt I."/>
        </authorList>
    </citation>
    <scope>FUNCTION</scope>
    <scope>DISRUPTION PHENOTYPE</scope>
    <scope>DEVELOPMENTAL STAGE</scope>
    <scope>TISSUE SPECIFICITY</scope>
    <scope>INDUCTION BY SPODOPTERA LITTORALIS; WOUNDING AND METHYL JASMONATE</scope>
</reference>
<reference key="8">
    <citation type="journal article" date="2013" name="Plant J.">
        <title>A GAL4-based targeted activation tagging system in Arabidopsis thaliana.</title>
        <authorList>
            <person name="Waki T."/>
            <person name="Miyashima S."/>
            <person name="Nakanishi M."/>
            <person name="Ikeda Y."/>
            <person name="Hashimoto T."/>
            <person name="Nakajima K."/>
        </authorList>
    </citation>
    <scope>FUNCTION</scope>
    <scope>TISSUE SPECIFICITY</scope>
</reference>
<reference key="9">
    <citation type="journal article" date="2019" name="Nature">
        <title>Mobile PEAR transcription factors integrate positional cues to prime cambial growth.</title>
        <authorList>
            <person name="Miyashima S."/>
            <person name="Roszak P."/>
            <person name="Sevilem I."/>
            <person name="Toyokura K."/>
            <person name="Blob B."/>
            <person name="Heo J.-O."/>
            <person name="Mellor N."/>
            <person name="Help-Rinta-Rahko H."/>
            <person name="Otero S."/>
            <person name="Smet W."/>
            <person name="Boekschoten M."/>
            <person name="Hooiveld G."/>
            <person name="Hashimoto K."/>
            <person name="Smetana O."/>
            <person name="Siligato R."/>
            <person name="Wallner E.-S."/>
            <person name="Maehoenen A.P."/>
            <person name="Kondo Y."/>
            <person name="Melnyk C.W."/>
            <person name="Greb T."/>
            <person name="Nakajima K."/>
            <person name="Sozzani R."/>
            <person name="Bishopp A."/>
            <person name="De Rybel B."/>
            <person name="Helariutta Y."/>
        </authorList>
    </citation>
    <scope>FUNCTION</scope>
    <scope>TISSUE SPECIFICITY</scope>
</reference>
<accession>Q8L9V6</accession>
<accession>Q8W4A2</accession>
<accession>Q9LQN7</accession>
<accession>Q9XGU6</accession>
<gene>
    <name evidence="9" type="primary">DOF1.1</name>
    <name evidence="8" type="synonym">OBP2</name>
    <name evidence="11" type="synonym">URP3</name>
    <name evidence="14" type="ordered locus">At1g07640</name>
    <name evidence="15" type="ORF">F24B9.30</name>
</gene>
<organism>
    <name type="scientific">Arabidopsis thaliana</name>
    <name type="common">Mouse-ear cress</name>
    <dbReference type="NCBI Taxonomy" id="3702"/>
    <lineage>
        <taxon>Eukaryota</taxon>
        <taxon>Viridiplantae</taxon>
        <taxon>Streptophyta</taxon>
        <taxon>Embryophyta</taxon>
        <taxon>Tracheophyta</taxon>
        <taxon>Spermatophyta</taxon>
        <taxon>Magnoliopsida</taxon>
        <taxon>eudicotyledons</taxon>
        <taxon>Gunneridae</taxon>
        <taxon>Pentapetalae</taxon>
        <taxon>rosids</taxon>
        <taxon>malvids</taxon>
        <taxon>Brassicales</taxon>
        <taxon>Brassicaceae</taxon>
        <taxon>Camelineae</taxon>
        <taxon>Arabidopsis</taxon>
    </lineage>
</organism>